<reference key="1">
    <citation type="submission" date="2007-10" db="EMBL/GenBank/DDBJ databases">
        <title>Complete sequence of Salinispora arenicola CNS-205.</title>
        <authorList>
            <consortium name="US DOE Joint Genome Institute"/>
            <person name="Copeland A."/>
            <person name="Lucas S."/>
            <person name="Lapidus A."/>
            <person name="Barry K."/>
            <person name="Glavina del Rio T."/>
            <person name="Dalin E."/>
            <person name="Tice H."/>
            <person name="Pitluck S."/>
            <person name="Foster B."/>
            <person name="Schmutz J."/>
            <person name="Larimer F."/>
            <person name="Land M."/>
            <person name="Hauser L."/>
            <person name="Kyrpides N."/>
            <person name="Ivanova N."/>
            <person name="Jensen P.R."/>
            <person name="Moore B.S."/>
            <person name="Penn K."/>
            <person name="Jenkins C."/>
            <person name="Udwary D."/>
            <person name="Xiang L."/>
            <person name="Gontang E."/>
            <person name="Richardson P."/>
        </authorList>
    </citation>
    <scope>NUCLEOTIDE SEQUENCE [LARGE SCALE GENOMIC DNA]</scope>
    <source>
        <strain>CNS-205</strain>
    </source>
</reference>
<gene>
    <name evidence="1" type="primary">rplV</name>
    <name type="ordered locus">Sare_4310</name>
</gene>
<protein>
    <recommendedName>
        <fullName evidence="1">Large ribosomal subunit protein uL22</fullName>
    </recommendedName>
    <alternativeName>
        <fullName evidence="3">50S ribosomal protein L22</fullName>
    </alternativeName>
</protein>
<feature type="chain" id="PRO_0000354516" description="Large ribosomal subunit protein uL22">
    <location>
        <begin position="1"/>
        <end position="152"/>
    </location>
</feature>
<feature type="region of interest" description="Disordered" evidence="2">
    <location>
        <begin position="124"/>
        <end position="152"/>
    </location>
</feature>
<feature type="compositionally biased region" description="Low complexity" evidence="2">
    <location>
        <begin position="124"/>
        <end position="143"/>
    </location>
</feature>
<comment type="function">
    <text evidence="1">This protein binds specifically to 23S rRNA; its binding is stimulated by other ribosomal proteins, e.g. L4, L17, and L20. It is important during the early stages of 50S assembly. It makes multiple contacts with different domains of the 23S rRNA in the assembled 50S subunit and ribosome (By similarity).</text>
</comment>
<comment type="function">
    <text evidence="1">The globular domain of the protein is located near the polypeptide exit tunnel on the outside of the subunit, while an extended beta-hairpin is found that lines the wall of the exit tunnel in the center of the 70S ribosome.</text>
</comment>
<comment type="subunit">
    <text evidence="1">Part of the 50S ribosomal subunit.</text>
</comment>
<comment type="similarity">
    <text evidence="1">Belongs to the universal ribosomal protein uL22 family.</text>
</comment>
<keyword id="KW-0687">Ribonucleoprotein</keyword>
<keyword id="KW-0689">Ribosomal protein</keyword>
<keyword id="KW-0694">RNA-binding</keyword>
<keyword id="KW-0699">rRNA-binding</keyword>
<name>RL22_SALAI</name>
<accession>A8M524</accession>
<proteinExistence type="inferred from homology"/>
<organism>
    <name type="scientific">Salinispora arenicola (strain CNS-205)</name>
    <dbReference type="NCBI Taxonomy" id="391037"/>
    <lineage>
        <taxon>Bacteria</taxon>
        <taxon>Bacillati</taxon>
        <taxon>Actinomycetota</taxon>
        <taxon>Actinomycetes</taxon>
        <taxon>Micromonosporales</taxon>
        <taxon>Micromonosporaceae</taxon>
        <taxon>Salinispora</taxon>
    </lineage>
</organism>
<evidence type="ECO:0000255" key="1">
    <source>
        <dbReference type="HAMAP-Rule" id="MF_01331"/>
    </source>
</evidence>
<evidence type="ECO:0000256" key="2">
    <source>
        <dbReference type="SAM" id="MobiDB-lite"/>
    </source>
</evidence>
<evidence type="ECO:0000305" key="3"/>
<sequence>MPGKGDAPVLPGARAVARYVRISPMKARRVVNLVRGLPAKEALTVLQFAPQAASEQVYKVLASAIANAENNERLDPDALLVSEAYVDEGPTMKRFQPRAQGRAYRIRKRTCHITVVVEAVAPAAPTKAASKKAAPAKQTTPAATESKTEGAE</sequence>
<dbReference type="EMBL" id="CP000850">
    <property type="protein sequence ID" value="ABW00092.1"/>
    <property type="molecule type" value="Genomic_DNA"/>
</dbReference>
<dbReference type="SMR" id="A8M524"/>
<dbReference type="STRING" id="391037.Sare_4310"/>
<dbReference type="KEGG" id="saq:Sare_4310"/>
<dbReference type="PATRIC" id="fig|391037.6.peg.4351"/>
<dbReference type="eggNOG" id="COG0091">
    <property type="taxonomic scope" value="Bacteria"/>
</dbReference>
<dbReference type="HOGENOM" id="CLU_083987_3_2_11"/>
<dbReference type="OrthoDB" id="9805969at2"/>
<dbReference type="GO" id="GO:0022625">
    <property type="term" value="C:cytosolic large ribosomal subunit"/>
    <property type="evidence" value="ECO:0007669"/>
    <property type="project" value="TreeGrafter"/>
</dbReference>
<dbReference type="GO" id="GO:0019843">
    <property type="term" value="F:rRNA binding"/>
    <property type="evidence" value="ECO:0007669"/>
    <property type="project" value="UniProtKB-UniRule"/>
</dbReference>
<dbReference type="GO" id="GO:0003735">
    <property type="term" value="F:structural constituent of ribosome"/>
    <property type="evidence" value="ECO:0007669"/>
    <property type="project" value="InterPro"/>
</dbReference>
<dbReference type="GO" id="GO:0006412">
    <property type="term" value="P:translation"/>
    <property type="evidence" value="ECO:0007669"/>
    <property type="project" value="UniProtKB-UniRule"/>
</dbReference>
<dbReference type="CDD" id="cd00336">
    <property type="entry name" value="Ribosomal_L22"/>
    <property type="match status" value="1"/>
</dbReference>
<dbReference type="FunFam" id="3.90.470.10:FF:000002">
    <property type="entry name" value="50S ribosomal protein L22"/>
    <property type="match status" value="1"/>
</dbReference>
<dbReference type="Gene3D" id="3.90.470.10">
    <property type="entry name" value="Ribosomal protein L22/L17"/>
    <property type="match status" value="1"/>
</dbReference>
<dbReference type="HAMAP" id="MF_01331_B">
    <property type="entry name" value="Ribosomal_uL22_B"/>
    <property type="match status" value="1"/>
</dbReference>
<dbReference type="InterPro" id="IPR001063">
    <property type="entry name" value="Ribosomal_uL22"/>
</dbReference>
<dbReference type="InterPro" id="IPR005727">
    <property type="entry name" value="Ribosomal_uL22_bac/chlpt-type"/>
</dbReference>
<dbReference type="InterPro" id="IPR047867">
    <property type="entry name" value="Ribosomal_uL22_bac/org-type"/>
</dbReference>
<dbReference type="InterPro" id="IPR018260">
    <property type="entry name" value="Ribosomal_uL22_CS"/>
</dbReference>
<dbReference type="InterPro" id="IPR036394">
    <property type="entry name" value="Ribosomal_uL22_sf"/>
</dbReference>
<dbReference type="NCBIfam" id="TIGR01044">
    <property type="entry name" value="rplV_bact"/>
    <property type="match status" value="1"/>
</dbReference>
<dbReference type="PANTHER" id="PTHR13501">
    <property type="entry name" value="CHLOROPLAST 50S RIBOSOMAL PROTEIN L22-RELATED"/>
    <property type="match status" value="1"/>
</dbReference>
<dbReference type="PANTHER" id="PTHR13501:SF8">
    <property type="entry name" value="LARGE RIBOSOMAL SUBUNIT PROTEIN UL22M"/>
    <property type="match status" value="1"/>
</dbReference>
<dbReference type="Pfam" id="PF00237">
    <property type="entry name" value="Ribosomal_L22"/>
    <property type="match status" value="1"/>
</dbReference>
<dbReference type="SUPFAM" id="SSF54843">
    <property type="entry name" value="Ribosomal protein L22"/>
    <property type="match status" value="1"/>
</dbReference>
<dbReference type="PROSITE" id="PS00464">
    <property type="entry name" value="RIBOSOMAL_L22"/>
    <property type="match status" value="1"/>
</dbReference>